<reference key="1">
    <citation type="journal article" date="2007" name="PLoS Genet.">
        <title>The complete genome sequence of Yersinia pseudotuberculosis IP31758, the causative agent of Far East scarlet-like fever.</title>
        <authorList>
            <person name="Eppinger M."/>
            <person name="Rosovitz M.J."/>
            <person name="Fricke W.F."/>
            <person name="Rasko D.A."/>
            <person name="Kokorina G."/>
            <person name="Fayolle C."/>
            <person name="Lindler L.E."/>
            <person name="Carniel E."/>
            <person name="Ravel J."/>
        </authorList>
    </citation>
    <scope>NUCLEOTIDE SEQUENCE [LARGE SCALE GENOMIC DNA]</scope>
    <source>
        <strain>IP 31758</strain>
    </source>
</reference>
<comment type="function">
    <text evidence="1">Specifically methylates guanosine-37 in various tRNAs.</text>
</comment>
<comment type="catalytic activity">
    <reaction evidence="1">
        <text>guanosine(37) in tRNA + S-adenosyl-L-methionine = N(1)-methylguanosine(37) in tRNA + S-adenosyl-L-homocysteine + H(+)</text>
        <dbReference type="Rhea" id="RHEA:36899"/>
        <dbReference type="Rhea" id="RHEA-COMP:10145"/>
        <dbReference type="Rhea" id="RHEA-COMP:10147"/>
        <dbReference type="ChEBI" id="CHEBI:15378"/>
        <dbReference type="ChEBI" id="CHEBI:57856"/>
        <dbReference type="ChEBI" id="CHEBI:59789"/>
        <dbReference type="ChEBI" id="CHEBI:73542"/>
        <dbReference type="ChEBI" id="CHEBI:74269"/>
        <dbReference type="EC" id="2.1.1.228"/>
    </reaction>
</comment>
<comment type="subunit">
    <text evidence="1">Homodimer.</text>
</comment>
<comment type="subcellular location">
    <subcellularLocation>
        <location evidence="1">Cytoplasm</location>
    </subcellularLocation>
</comment>
<comment type="similarity">
    <text evidence="1">Belongs to the RNA methyltransferase TrmD family.</text>
</comment>
<sequence>MWIGVISLFPEMFRAITDYGVTGRAVKNGLLSVQCWSPRDFTYDRHRTVDDRPYGGGPGMLMMVQPLREAIHAAKAAAGEGAKVIYLSPQGRKLDQQGVCELAMNQKMILVCGRYEGVDERVIKTEIDEEWSIGDYVLSGGELPAMTLIDSVSRFIPGVLGHHASAEEDSFVDGLLDCPHYTRPEVLEGMEVPPVLLSGNHAEIRRWRLKQSLGRTWLRRPELLESLALTDEQMVLLAEFQREHKP</sequence>
<evidence type="ECO:0000255" key="1">
    <source>
        <dbReference type="HAMAP-Rule" id="MF_00605"/>
    </source>
</evidence>
<accession>A7FLQ5</accession>
<keyword id="KW-0963">Cytoplasm</keyword>
<keyword id="KW-0489">Methyltransferase</keyword>
<keyword id="KW-0949">S-adenosyl-L-methionine</keyword>
<keyword id="KW-0808">Transferase</keyword>
<keyword id="KW-0819">tRNA processing</keyword>
<proteinExistence type="inferred from homology"/>
<dbReference type="EC" id="2.1.1.228" evidence="1"/>
<dbReference type="EMBL" id="CP000720">
    <property type="protein sequence ID" value="ABS48061.1"/>
    <property type="molecule type" value="Genomic_DNA"/>
</dbReference>
<dbReference type="RefSeq" id="WP_002222284.1">
    <property type="nucleotide sequence ID" value="NC_009708.1"/>
</dbReference>
<dbReference type="SMR" id="A7FLQ5"/>
<dbReference type="GeneID" id="57975424"/>
<dbReference type="KEGG" id="ypi:YpsIP31758_3226"/>
<dbReference type="HOGENOM" id="CLU_047363_0_1_6"/>
<dbReference type="Proteomes" id="UP000002412">
    <property type="component" value="Chromosome"/>
</dbReference>
<dbReference type="GO" id="GO:0005829">
    <property type="term" value="C:cytosol"/>
    <property type="evidence" value="ECO:0007669"/>
    <property type="project" value="TreeGrafter"/>
</dbReference>
<dbReference type="GO" id="GO:0052906">
    <property type="term" value="F:tRNA (guanine(37)-N1)-methyltransferase activity"/>
    <property type="evidence" value="ECO:0007669"/>
    <property type="project" value="UniProtKB-UniRule"/>
</dbReference>
<dbReference type="GO" id="GO:0002939">
    <property type="term" value="P:tRNA N1-guanine methylation"/>
    <property type="evidence" value="ECO:0007669"/>
    <property type="project" value="TreeGrafter"/>
</dbReference>
<dbReference type="CDD" id="cd18080">
    <property type="entry name" value="TrmD-like"/>
    <property type="match status" value="1"/>
</dbReference>
<dbReference type="FunFam" id="1.10.1270.20:FF:000001">
    <property type="entry name" value="tRNA (guanine-N(1)-)-methyltransferase"/>
    <property type="match status" value="1"/>
</dbReference>
<dbReference type="FunFam" id="3.40.1280.10:FF:000001">
    <property type="entry name" value="tRNA (guanine-N(1)-)-methyltransferase"/>
    <property type="match status" value="1"/>
</dbReference>
<dbReference type="Gene3D" id="3.40.1280.10">
    <property type="match status" value="1"/>
</dbReference>
<dbReference type="Gene3D" id="1.10.1270.20">
    <property type="entry name" value="tRNA(m1g37)methyltransferase, domain 2"/>
    <property type="match status" value="1"/>
</dbReference>
<dbReference type="HAMAP" id="MF_00605">
    <property type="entry name" value="TrmD"/>
    <property type="match status" value="1"/>
</dbReference>
<dbReference type="InterPro" id="IPR029028">
    <property type="entry name" value="Alpha/beta_knot_MTases"/>
</dbReference>
<dbReference type="InterPro" id="IPR023148">
    <property type="entry name" value="tRNA_m1G_MeTrfase_C_sf"/>
</dbReference>
<dbReference type="InterPro" id="IPR002649">
    <property type="entry name" value="tRNA_m1G_MeTrfase_TrmD"/>
</dbReference>
<dbReference type="InterPro" id="IPR029026">
    <property type="entry name" value="tRNA_m1G_MTases_N"/>
</dbReference>
<dbReference type="InterPro" id="IPR016009">
    <property type="entry name" value="tRNA_MeTrfase_TRMD/TRM10"/>
</dbReference>
<dbReference type="NCBIfam" id="NF000648">
    <property type="entry name" value="PRK00026.1"/>
    <property type="match status" value="1"/>
</dbReference>
<dbReference type="NCBIfam" id="TIGR00088">
    <property type="entry name" value="trmD"/>
    <property type="match status" value="1"/>
</dbReference>
<dbReference type="PANTHER" id="PTHR46417">
    <property type="entry name" value="TRNA (GUANINE-N(1)-)-METHYLTRANSFERASE"/>
    <property type="match status" value="1"/>
</dbReference>
<dbReference type="PANTHER" id="PTHR46417:SF1">
    <property type="entry name" value="TRNA (GUANINE-N(1)-)-METHYLTRANSFERASE"/>
    <property type="match status" value="1"/>
</dbReference>
<dbReference type="Pfam" id="PF01746">
    <property type="entry name" value="tRNA_m1G_MT"/>
    <property type="match status" value="1"/>
</dbReference>
<dbReference type="PIRSF" id="PIRSF000386">
    <property type="entry name" value="tRNA_mtase"/>
    <property type="match status" value="1"/>
</dbReference>
<dbReference type="SUPFAM" id="SSF75217">
    <property type="entry name" value="alpha/beta knot"/>
    <property type="match status" value="1"/>
</dbReference>
<feature type="chain" id="PRO_1000061275" description="tRNA (guanine-N(1)-)-methyltransferase">
    <location>
        <begin position="1"/>
        <end position="246"/>
    </location>
</feature>
<feature type="binding site" evidence="1">
    <location>
        <position position="113"/>
    </location>
    <ligand>
        <name>S-adenosyl-L-methionine</name>
        <dbReference type="ChEBI" id="CHEBI:59789"/>
    </ligand>
</feature>
<feature type="binding site" evidence="1">
    <location>
        <begin position="133"/>
        <end position="138"/>
    </location>
    <ligand>
        <name>S-adenosyl-L-methionine</name>
        <dbReference type="ChEBI" id="CHEBI:59789"/>
    </ligand>
</feature>
<gene>
    <name evidence="1" type="primary">trmD</name>
    <name type="ordered locus">YpsIP31758_3226</name>
</gene>
<protein>
    <recommendedName>
        <fullName evidence="1">tRNA (guanine-N(1)-)-methyltransferase</fullName>
        <ecNumber evidence="1">2.1.1.228</ecNumber>
    </recommendedName>
    <alternativeName>
        <fullName evidence="1">M1G-methyltransferase</fullName>
    </alternativeName>
    <alternativeName>
        <fullName evidence="1">tRNA [GM37] methyltransferase</fullName>
    </alternativeName>
</protein>
<organism>
    <name type="scientific">Yersinia pseudotuberculosis serotype O:1b (strain IP 31758)</name>
    <dbReference type="NCBI Taxonomy" id="349747"/>
    <lineage>
        <taxon>Bacteria</taxon>
        <taxon>Pseudomonadati</taxon>
        <taxon>Pseudomonadota</taxon>
        <taxon>Gammaproteobacteria</taxon>
        <taxon>Enterobacterales</taxon>
        <taxon>Yersiniaceae</taxon>
        <taxon>Yersinia</taxon>
    </lineage>
</organism>
<name>TRMD_YERP3</name>